<feature type="signal peptide" evidence="2">
    <location>
        <begin position="1"/>
        <end position="29"/>
    </location>
</feature>
<feature type="chain" id="PRO_0000400036" description="Protein disulfide isomerase-like 5-1">
    <location>
        <begin position="30"/>
        <end position="147"/>
    </location>
</feature>
<feature type="domain" description="Thioredoxin" evidence="3">
    <location>
        <begin position="30"/>
        <end position="137"/>
    </location>
</feature>
<feature type="active site" description="Nucleophile" evidence="1">
    <location>
        <position position="59"/>
    </location>
</feature>
<feature type="active site" description="Nucleophile" evidence="1">
    <location>
        <position position="62"/>
    </location>
</feature>
<feature type="site" description="Lowers pKa of C-terminal Cys of active site" evidence="1">
    <location>
        <position position="123"/>
    </location>
</feature>
<feature type="disulfide bond" description="Redox-active" evidence="3">
    <location>
        <begin position="59"/>
        <end position="62"/>
    </location>
</feature>
<keyword id="KW-1015">Disulfide bond</keyword>
<keyword id="KW-0676">Redox-active center</keyword>
<keyword id="KW-1185">Reference proteome</keyword>
<keyword id="KW-0732">Signal</keyword>
<reference key="1">
    <citation type="journal article" date="2005" name="Genome Res.">
        <title>Sequence, annotation, and analysis of synteny between rice chromosome 3 and diverged grass species.</title>
        <authorList>
            <consortium name="The rice chromosome 3 sequencing consortium"/>
            <person name="Buell C.R."/>
            <person name="Yuan Q."/>
            <person name="Ouyang S."/>
            <person name="Liu J."/>
            <person name="Zhu W."/>
            <person name="Wang A."/>
            <person name="Maiti R."/>
            <person name="Haas B."/>
            <person name="Wortman J."/>
            <person name="Pertea M."/>
            <person name="Jones K.M."/>
            <person name="Kim M."/>
            <person name="Overton L."/>
            <person name="Tsitrin T."/>
            <person name="Fadrosh D."/>
            <person name="Bera J."/>
            <person name="Weaver B."/>
            <person name="Jin S."/>
            <person name="Johri S."/>
            <person name="Reardon M."/>
            <person name="Webb K."/>
            <person name="Hill J."/>
            <person name="Moffat K."/>
            <person name="Tallon L."/>
            <person name="Van Aken S."/>
            <person name="Lewis M."/>
            <person name="Utterback T."/>
            <person name="Feldblyum T."/>
            <person name="Zismann V."/>
            <person name="Iobst S."/>
            <person name="Hsiao J."/>
            <person name="de Vazeille A.R."/>
            <person name="Salzberg S.L."/>
            <person name="White O."/>
            <person name="Fraser C.M."/>
            <person name="Yu Y."/>
            <person name="Kim H."/>
            <person name="Rambo T."/>
            <person name="Currie J."/>
            <person name="Collura K."/>
            <person name="Kernodle-Thompson S."/>
            <person name="Wei F."/>
            <person name="Kudrna K."/>
            <person name="Ammiraju J.S.S."/>
            <person name="Luo M."/>
            <person name="Goicoechea J.L."/>
            <person name="Wing R.A."/>
            <person name="Henry D."/>
            <person name="Oates R."/>
            <person name="Palmer M."/>
            <person name="Pries G."/>
            <person name="Saski C."/>
            <person name="Simmons J."/>
            <person name="Soderlund C."/>
            <person name="Nelson W."/>
            <person name="de la Bastide M."/>
            <person name="Spiegel L."/>
            <person name="Nascimento L."/>
            <person name="Huang E."/>
            <person name="Preston R."/>
            <person name="Zutavern T."/>
            <person name="Palmer L."/>
            <person name="O'Shaughnessy A."/>
            <person name="Dike S."/>
            <person name="McCombie W.R."/>
            <person name="Minx P."/>
            <person name="Cordum H."/>
            <person name="Wilson R."/>
            <person name="Jin W."/>
            <person name="Lee H.R."/>
            <person name="Jiang J."/>
            <person name="Jackson S."/>
        </authorList>
    </citation>
    <scope>NUCLEOTIDE SEQUENCE [LARGE SCALE GENOMIC DNA]</scope>
    <source>
        <strain>cv. Nipponbare</strain>
    </source>
</reference>
<reference key="2">
    <citation type="journal article" date="2005" name="Nature">
        <title>The map-based sequence of the rice genome.</title>
        <authorList>
            <consortium name="International rice genome sequencing project (IRGSP)"/>
        </authorList>
    </citation>
    <scope>NUCLEOTIDE SEQUENCE [LARGE SCALE GENOMIC DNA]</scope>
    <source>
        <strain>cv. Nipponbare</strain>
    </source>
</reference>
<reference key="3">
    <citation type="journal article" date="2008" name="Nucleic Acids Res.">
        <title>The rice annotation project database (RAP-DB): 2008 update.</title>
        <authorList>
            <consortium name="The rice annotation project (RAP)"/>
        </authorList>
    </citation>
    <scope>GENOME REANNOTATION</scope>
    <source>
        <strain>cv. Nipponbare</strain>
    </source>
</reference>
<reference key="4">
    <citation type="journal article" date="2013" name="Rice">
        <title>Improvement of the Oryza sativa Nipponbare reference genome using next generation sequence and optical map data.</title>
        <authorList>
            <person name="Kawahara Y."/>
            <person name="de la Bastide M."/>
            <person name="Hamilton J.P."/>
            <person name="Kanamori H."/>
            <person name="McCombie W.R."/>
            <person name="Ouyang S."/>
            <person name="Schwartz D.C."/>
            <person name="Tanaka T."/>
            <person name="Wu J."/>
            <person name="Zhou S."/>
            <person name="Childs K.L."/>
            <person name="Davidson R.M."/>
            <person name="Lin H."/>
            <person name="Quesada-Ocampo L."/>
            <person name="Vaillancourt B."/>
            <person name="Sakai H."/>
            <person name="Lee S.S."/>
            <person name="Kim J."/>
            <person name="Numa H."/>
            <person name="Itoh T."/>
            <person name="Buell C.R."/>
            <person name="Matsumoto T."/>
        </authorList>
    </citation>
    <scope>GENOME REANNOTATION</scope>
    <source>
        <strain>cv. Nipponbare</strain>
    </source>
</reference>
<reference key="5">
    <citation type="journal article" date="2003" name="Science">
        <title>Collection, mapping, and annotation of over 28,000 cDNA clones from japonica rice.</title>
        <authorList>
            <consortium name="The rice full-length cDNA consortium"/>
        </authorList>
    </citation>
    <scope>NUCLEOTIDE SEQUENCE [LARGE SCALE MRNA]</scope>
    <source>
        <strain>cv. Nipponbare</strain>
    </source>
</reference>
<reference key="6">
    <citation type="journal article" date="2005" name="Plant Physiol.">
        <title>Phylogenetic analyses identify 10 classes of the protein disulfide isomerase family in plants, including single-domain protein disulfide isomerase-related proteins.</title>
        <authorList>
            <person name="Houston N.L."/>
            <person name="Fan C."/>
            <person name="Xiang J.Q."/>
            <person name="Schulze J.M."/>
            <person name="Jung R."/>
            <person name="Boston R.S."/>
        </authorList>
    </citation>
    <scope>GENE FAMILY</scope>
    <scope>NOMENCLATURE</scope>
</reference>
<reference key="7">
    <citation type="journal article" date="2010" name="BMC Plant Biol.">
        <title>The protein disulfide isomerase gene family in bread wheat (T. aestivum L.).</title>
        <authorList>
            <person name="d'Aloisio E."/>
            <person name="Paolacci A.R."/>
            <person name="Dhanapal A.P."/>
            <person name="Tanzarella O.A."/>
            <person name="Porceddu E."/>
            <person name="Ciaffi M."/>
        </authorList>
    </citation>
    <scope>GENE FAMILY</scope>
    <scope>NOMENCLATURE</scope>
</reference>
<name>PDI51_ORYSJ</name>
<evidence type="ECO:0000250" key="1"/>
<evidence type="ECO:0000255" key="2"/>
<evidence type="ECO:0000255" key="3">
    <source>
        <dbReference type="PROSITE-ProRule" id="PRU00691"/>
    </source>
</evidence>
<evidence type="ECO:0000305" key="4"/>
<sequence length="147" mass="16282">MDLAPGRRARLLVALALVVLVALAARSGAEVITLTEETFSDKIKEKDTVWFVKFCVPWCKHCKNLGTLWEDLGKVMEGADEIEIGQVDCGVSKPVCSKVDIHSYPTFKVFYEGEEVAKYKGPRNVESLKNFVSDEAEKAGEAKLQDS</sequence>
<gene>
    <name type="primary">PDIL5-1</name>
    <name type="synonym">PDIL6-1</name>
    <name type="ordered locus">Os03g0287900</name>
    <name type="ordered locus">LOC_Os03g17860</name>
</gene>
<proteinExistence type="evidence at transcript level"/>
<dbReference type="EMBL" id="DP000009">
    <property type="protein sequence ID" value="ABF95370.1"/>
    <property type="molecule type" value="Genomic_DNA"/>
</dbReference>
<dbReference type="EMBL" id="AP008209">
    <property type="protein sequence ID" value="BAF11695.1"/>
    <property type="molecule type" value="Genomic_DNA"/>
</dbReference>
<dbReference type="EMBL" id="AP014959">
    <property type="protein sequence ID" value="BAS83643.1"/>
    <property type="molecule type" value="Genomic_DNA"/>
</dbReference>
<dbReference type="EMBL" id="AK063663">
    <property type="protein sequence ID" value="BAG88812.1"/>
    <property type="molecule type" value="mRNA"/>
</dbReference>
<dbReference type="RefSeq" id="XP_015628450.1">
    <property type="nucleotide sequence ID" value="XM_015772964.1"/>
</dbReference>
<dbReference type="SMR" id="Q10N04"/>
<dbReference type="FunCoup" id="Q10N04">
    <property type="interactions" value="492"/>
</dbReference>
<dbReference type="STRING" id="39947.Q10N04"/>
<dbReference type="PaxDb" id="39947-Q10N04"/>
<dbReference type="EnsemblPlants" id="Os03t0287900-01">
    <property type="protein sequence ID" value="Os03t0287900-01"/>
    <property type="gene ID" value="Os03g0287900"/>
</dbReference>
<dbReference type="Gramene" id="Os03t0287900-01">
    <property type="protein sequence ID" value="Os03t0287900-01"/>
    <property type="gene ID" value="Os03g0287900"/>
</dbReference>
<dbReference type="KEGG" id="dosa:Os03g0287900"/>
<dbReference type="eggNOG" id="KOG0191">
    <property type="taxonomic scope" value="Eukaryota"/>
</dbReference>
<dbReference type="HOGENOM" id="CLU_090389_4_2_1"/>
<dbReference type="InParanoid" id="Q10N04"/>
<dbReference type="OMA" id="WCRHSRN"/>
<dbReference type="OrthoDB" id="72053at2759"/>
<dbReference type="Proteomes" id="UP000000763">
    <property type="component" value="Chromosome 3"/>
</dbReference>
<dbReference type="Proteomes" id="UP000059680">
    <property type="component" value="Chromosome 3"/>
</dbReference>
<dbReference type="GO" id="GO:0005783">
    <property type="term" value="C:endoplasmic reticulum"/>
    <property type="evidence" value="ECO:0000318"/>
    <property type="project" value="GO_Central"/>
</dbReference>
<dbReference type="GO" id="GO:0003756">
    <property type="term" value="F:protein disulfide isomerase activity"/>
    <property type="evidence" value="ECO:0000318"/>
    <property type="project" value="GO_Central"/>
</dbReference>
<dbReference type="GO" id="GO:0006457">
    <property type="term" value="P:protein folding"/>
    <property type="evidence" value="ECO:0000318"/>
    <property type="project" value="GO_Central"/>
</dbReference>
<dbReference type="FunFam" id="3.40.30.10:FF:000351">
    <property type="entry name" value="Protein disulfide isomerase-like 5-1"/>
    <property type="match status" value="1"/>
</dbReference>
<dbReference type="Gene3D" id="3.40.30.10">
    <property type="entry name" value="Glutaredoxin"/>
    <property type="match status" value="1"/>
</dbReference>
<dbReference type="InterPro" id="IPR051063">
    <property type="entry name" value="PDI"/>
</dbReference>
<dbReference type="InterPro" id="IPR036249">
    <property type="entry name" value="Thioredoxin-like_sf"/>
</dbReference>
<dbReference type="InterPro" id="IPR013766">
    <property type="entry name" value="Thioredoxin_domain"/>
</dbReference>
<dbReference type="PANTHER" id="PTHR45672">
    <property type="entry name" value="PROTEIN DISULFIDE-ISOMERASE C17H9.14C-RELATED"/>
    <property type="match status" value="1"/>
</dbReference>
<dbReference type="PANTHER" id="PTHR45672:SF3">
    <property type="entry name" value="THIOREDOXIN DOMAIN-CONTAINING PROTEIN 5"/>
    <property type="match status" value="1"/>
</dbReference>
<dbReference type="Pfam" id="PF00085">
    <property type="entry name" value="Thioredoxin"/>
    <property type="match status" value="1"/>
</dbReference>
<dbReference type="SUPFAM" id="SSF52833">
    <property type="entry name" value="Thioredoxin-like"/>
    <property type="match status" value="1"/>
</dbReference>
<dbReference type="PROSITE" id="PS51352">
    <property type="entry name" value="THIOREDOXIN_2"/>
    <property type="match status" value="1"/>
</dbReference>
<accession>Q10N04</accession>
<accession>A0A0P0VW92</accession>
<comment type="function">
    <text evidence="1">Acts as a protein-folding catalyst that interacts with nascent polypeptides to catalyze the formation, isomerization, and reduction or oxidation of disulfide bonds. May play a role in storage protein biogenesis (By similarity).</text>
</comment>
<comment type="similarity">
    <text evidence="4">Belongs to the protein disulfide isomerase family.</text>
</comment>
<protein>
    <recommendedName>
        <fullName>Protein disulfide isomerase-like 5-1</fullName>
        <shortName>OsPDIL5-1</shortName>
    </recommendedName>
    <alternativeName>
        <fullName>Protein disulfide isomerase-like 6-1</fullName>
        <shortName>OsPDIL6-1</shortName>
    </alternativeName>
</protein>
<organism>
    <name type="scientific">Oryza sativa subsp. japonica</name>
    <name type="common">Rice</name>
    <dbReference type="NCBI Taxonomy" id="39947"/>
    <lineage>
        <taxon>Eukaryota</taxon>
        <taxon>Viridiplantae</taxon>
        <taxon>Streptophyta</taxon>
        <taxon>Embryophyta</taxon>
        <taxon>Tracheophyta</taxon>
        <taxon>Spermatophyta</taxon>
        <taxon>Magnoliopsida</taxon>
        <taxon>Liliopsida</taxon>
        <taxon>Poales</taxon>
        <taxon>Poaceae</taxon>
        <taxon>BOP clade</taxon>
        <taxon>Oryzoideae</taxon>
        <taxon>Oryzeae</taxon>
        <taxon>Oryzinae</taxon>
        <taxon>Oryza</taxon>
        <taxon>Oryza sativa</taxon>
    </lineage>
</organism>